<name>RAB43_HUMAN</name>
<reference key="1">
    <citation type="journal article" date="2003" name="DNA Seq.">
        <title>Isolation, expression pattern of a novel human RAB gene RAB41 and characterization of its intronless homolog RAB41P.</title>
        <authorList>
            <person name="Guo J.H."/>
            <person name="Chen L."/>
            <person name="Chen S."/>
            <person name="Liu X."/>
            <person name="Saiyin H."/>
            <person name="Deng Q."/>
            <person name="Zhuang Y."/>
            <person name="Wan B."/>
            <person name="Yu L."/>
            <person name="Zhao S.Y."/>
        </authorList>
    </citation>
    <scope>NUCLEOTIDE SEQUENCE [MRNA]</scope>
    <scope>TISSUE SPECIFICITY</scope>
    <source>
        <tissue>Brain</tissue>
    </source>
</reference>
<reference key="2">
    <citation type="journal article" date="2004" name="Nat. Genet.">
        <title>Complete sequencing and characterization of 21,243 full-length human cDNAs.</title>
        <authorList>
            <person name="Ota T."/>
            <person name="Suzuki Y."/>
            <person name="Nishikawa T."/>
            <person name="Otsuki T."/>
            <person name="Sugiyama T."/>
            <person name="Irie R."/>
            <person name="Wakamatsu A."/>
            <person name="Hayashi K."/>
            <person name="Sato H."/>
            <person name="Nagai K."/>
            <person name="Kimura K."/>
            <person name="Makita H."/>
            <person name="Sekine M."/>
            <person name="Obayashi M."/>
            <person name="Nishi T."/>
            <person name="Shibahara T."/>
            <person name="Tanaka T."/>
            <person name="Ishii S."/>
            <person name="Yamamoto J."/>
            <person name="Saito K."/>
            <person name="Kawai Y."/>
            <person name="Isono Y."/>
            <person name="Nakamura Y."/>
            <person name="Nagahari K."/>
            <person name="Murakami K."/>
            <person name="Yasuda T."/>
            <person name="Iwayanagi T."/>
            <person name="Wagatsuma M."/>
            <person name="Shiratori A."/>
            <person name="Sudo H."/>
            <person name="Hosoiri T."/>
            <person name="Kaku Y."/>
            <person name="Kodaira H."/>
            <person name="Kondo H."/>
            <person name="Sugawara M."/>
            <person name="Takahashi M."/>
            <person name="Kanda K."/>
            <person name="Yokoi T."/>
            <person name="Furuya T."/>
            <person name="Kikkawa E."/>
            <person name="Omura Y."/>
            <person name="Abe K."/>
            <person name="Kamihara K."/>
            <person name="Katsuta N."/>
            <person name="Sato K."/>
            <person name="Tanikawa M."/>
            <person name="Yamazaki M."/>
            <person name="Ninomiya K."/>
            <person name="Ishibashi T."/>
            <person name="Yamashita H."/>
            <person name="Murakawa K."/>
            <person name="Fujimori K."/>
            <person name="Tanai H."/>
            <person name="Kimata M."/>
            <person name="Watanabe M."/>
            <person name="Hiraoka S."/>
            <person name="Chiba Y."/>
            <person name="Ishida S."/>
            <person name="Ono Y."/>
            <person name="Takiguchi S."/>
            <person name="Watanabe S."/>
            <person name="Yosida M."/>
            <person name="Hotuta T."/>
            <person name="Kusano J."/>
            <person name="Kanehori K."/>
            <person name="Takahashi-Fujii A."/>
            <person name="Hara H."/>
            <person name="Tanase T.-O."/>
            <person name="Nomura Y."/>
            <person name="Togiya S."/>
            <person name="Komai F."/>
            <person name="Hara R."/>
            <person name="Takeuchi K."/>
            <person name="Arita M."/>
            <person name="Imose N."/>
            <person name="Musashino K."/>
            <person name="Yuuki H."/>
            <person name="Oshima A."/>
            <person name="Sasaki N."/>
            <person name="Aotsuka S."/>
            <person name="Yoshikawa Y."/>
            <person name="Matsunawa H."/>
            <person name="Ichihara T."/>
            <person name="Shiohata N."/>
            <person name="Sano S."/>
            <person name="Moriya S."/>
            <person name="Momiyama H."/>
            <person name="Satoh N."/>
            <person name="Takami S."/>
            <person name="Terashima Y."/>
            <person name="Suzuki O."/>
            <person name="Nakagawa S."/>
            <person name="Senoh A."/>
            <person name="Mizoguchi H."/>
            <person name="Goto Y."/>
            <person name="Shimizu F."/>
            <person name="Wakebe H."/>
            <person name="Hishigaki H."/>
            <person name="Watanabe T."/>
            <person name="Sugiyama A."/>
            <person name="Takemoto M."/>
            <person name="Kawakami B."/>
            <person name="Yamazaki M."/>
            <person name="Watanabe K."/>
            <person name="Kumagai A."/>
            <person name="Itakura S."/>
            <person name="Fukuzumi Y."/>
            <person name="Fujimori Y."/>
            <person name="Komiyama M."/>
            <person name="Tashiro H."/>
            <person name="Tanigami A."/>
            <person name="Fujiwara T."/>
            <person name="Ono T."/>
            <person name="Yamada K."/>
            <person name="Fujii Y."/>
            <person name="Ozaki K."/>
            <person name="Hirao M."/>
            <person name="Ohmori Y."/>
            <person name="Kawabata A."/>
            <person name="Hikiji T."/>
            <person name="Kobatake N."/>
            <person name="Inagaki H."/>
            <person name="Ikema Y."/>
            <person name="Okamoto S."/>
            <person name="Okitani R."/>
            <person name="Kawakami T."/>
            <person name="Noguchi S."/>
            <person name="Itoh T."/>
            <person name="Shigeta K."/>
            <person name="Senba T."/>
            <person name="Matsumura K."/>
            <person name="Nakajima Y."/>
            <person name="Mizuno T."/>
            <person name="Morinaga M."/>
            <person name="Sasaki M."/>
            <person name="Togashi T."/>
            <person name="Oyama M."/>
            <person name="Hata H."/>
            <person name="Watanabe M."/>
            <person name="Komatsu T."/>
            <person name="Mizushima-Sugano J."/>
            <person name="Satoh T."/>
            <person name="Shirai Y."/>
            <person name="Takahashi Y."/>
            <person name="Nakagawa K."/>
            <person name="Okumura K."/>
            <person name="Nagase T."/>
            <person name="Nomura N."/>
            <person name="Kikuchi H."/>
            <person name="Masuho Y."/>
            <person name="Yamashita R."/>
            <person name="Nakai K."/>
            <person name="Yada T."/>
            <person name="Nakamura Y."/>
            <person name="Ohara O."/>
            <person name="Isogai T."/>
            <person name="Sugano S."/>
        </authorList>
    </citation>
    <scope>NUCLEOTIDE SEQUENCE [LARGE SCALE MRNA]</scope>
</reference>
<reference key="3">
    <citation type="journal article" date="2006" name="Nature">
        <title>The DNA sequence, annotation and analysis of human chromosome 3.</title>
        <authorList>
            <person name="Muzny D.M."/>
            <person name="Scherer S.E."/>
            <person name="Kaul R."/>
            <person name="Wang J."/>
            <person name="Yu J."/>
            <person name="Sudbrak R."/>
            <person name="Buhay C.J."/>
            <person name="Chen R."/>
            <person name="Cree A."/>
            <person name="Ding Y."/>
            <person name="Dugan-Rocha S."/>
            <person name="Gill R."/>
            <person name="Gunaratne P."/>
            <person name="Harris R.A."/>
            <person name="Hawes A.C."/>
            <person name="Hernandez J."/>
            <person name="Hodgson A.V."/>
            <person name="Hume J."/>
            <person name="Jackson A."/>
            <person name="Khan Z.M."/>
            <person name="Kovar-Smith C."/>
            <person name="Lewis L.R."/>
            <person name="Lozado R.J."/>
            <person name="Metzker M.L."/>
            <person name="Milosavljevic A."/>
            <person name="Miner G.R."/>
            <person name="Morgan M.B."/>
            <person name="Nazareth L.V."/>
            <person name="Scott G."/>
            <person name="Sodergren E."/>
            <person name="Song X.-Z."/>
            <person name="Steffen D."/>
            <person name="Wei S."/>
            <person name="Wheeler D.A."/>
            <person name="Wright M.W."/>
            <person name="Worley K.C."/>
            <person name="Yuan Y."/>
            <person name="Zhang Z."/>
            <person name="Adams C.Q."/>
            <person name="Ansari-Lari M.A."/>
            <person name="Ayele M."/>
            <person name="Brown M.J."/>
            <person name="Chen G."/>
            <person name="Chen Z."/>
            <person name="Clendenning J."/>
            <person name="Clerc-Blankenburg K.P."/>
            <person name="Chen R."/>
            <person name="Chen Z."/>
            <person name="Davis C."/>
            <person name="Delgado O."/>
            <person name="Dinh H.H."/>
            <person name="Dong W."/>
            <person name="Draper H."/>
            <person name="Ernst S."/>
            <person name="Fu G."/>
            <person name="Gonzalez-Garay M.L."/>
            <person name="Garcia D.K."/>
            <person name="Gillett W."/>
            <person name="Gu J."/>
            <person name="Hao B."/>
            <person name="Haugen E."/>
            <person name="Havlak P."/>
            <person name="He X."/>
            <person name="Hennig S."/>
            <person name="Hu S."/>
            <person name="Huang W."/>
            <person name="Jackson L.R."/>
            <person name="Jacob L.S."/>
            <person name="Kelly S.H."/>
            <person name="Kube M."/>
            <person name="Levy R."/>
            <person name="Li Z."/>
            <person name="Liu B."/>
            <person name="Liu J."/>
            <person name="Liu W."/>
            <person name="Lu J."/>
            <person name="Maheshwari M."/>
            <person name="Nguyen B.-V."/>
            <person name="Okwuonu G.O."/>
            <person name="Palmeiri A."/>
            <person name="Pasternak S."/>
            <person name="Perez L.M."/>
            <person name="Phelps K.A."/>
            <person name="Plopper F.J."/>
            <person name="Qiang B."/>
            <person name="Raymond C."/>
            <person name="Rodriguez R."/>
            <person name="Saenphimmachak C."/>
            <person name="Santibanez J."/>
            <person name="Shen H."/>
            <person name="Shen Y."/>
            <person name="Subramanian S."/>
            <person name="Tabor P.E."/>
            <person name="Verduzco D."/>
            <person name="Waldron L."/>
            <person name="Wang J."/>
            <person name="Wang J."/>
            <person name="Wang Q."/>
            <person name="Williams G.A."/>
            <person name="Wong G.K.-S."/>
            <person name="Yao Z."/>
            <person name="Zhang J."/>
            <person name="Zhang X."/>
            <person name="Zhao G."/>
            <person name="Zhou J."/>
            <person name="Zhou Y."/>
            <person name="Nelson D."/>
            <person name="Lehrach H."/>
            <person name="Reinhardt R."/>
            <person name="Naylor S.L."/>
            <person name="Yang H."/>
            <person name="Olson M."/>
            <person name="Weinstock G."/>
            <person name="Gibbs R.A."/>
        </authorList>
    </citation>
    <scope>NUCLEOTIDE SEQUENCE [LARGE SCALE GENOMIC DNA]</scope>
</reference>
<reference key="4">
    <citation type="submission" date="2005-09" db="EMBL/GenBank/DDBJ databases">
        <authorList>
            <person name="Mural R.J."/>
            <person name="Istrail S."/>
            <person name="Sutton G.G."/>
            <person name="Florea L."/>
            <person name="Halpern A.L."/>
            <person name="Mobarry C.M."/>
            <person name="Lippert R."/>
            <person name="Walenz B."/>
            <person name="Shatkay H."/>
            <person name="Dew I."/>
            <person name="Miller J.R."/>
            <person name="Flanigan M.J."/>
            <person name="Edwards N.J."/>
            <person name="Bolanos R."/>
            <person name="Fasulo D."/>
            <person name="Halldorsson B.V."/>
            <person name="Hannenhalli S."/>
            <person name="Turner R."/>
            <person name="Yooseph S."/>
            <person name="Lu F."/>
            <person name="Nusskern D.R."/>
            <person name="Shue B.C."/>
            <person name="Zheng X.H."/>
            <person name="Zhong F."/>
            <person name="Delcher A.L."/>
            <person name="Huson D.H."/>
            <person name="Kravitz S.A."/>
            <person name="Mouchard L."/>
            <person name="Reinert K."/>
            <person name="Remington K.A."/>
            <person name="Clark A.G."/>
            <person name="Waterman M.S."/>
            <person name="Eichler E.E."/>
            <person name="Adams M.D."/>
            <person name="Hunkapiller M.W."/>
            <person name="Myers E.W."/>
            <person name="Venter J.C."/>
        </authorList>
    </citation>
    <scope>NUCLEOTIDE SEQUENCE [LARGE SCALE GENOMIC DNA]</scope>
</reference>
<reference key="5">
    <citation type="journal article" date="2004" name="Genome Res.">
        <title>The status, quality, and expansion of the NIH full-length cDNA project: the Mammalian Gene Collection (MGC).</title>
        <authorList>
            <consortium name="The MGC Project Team"/>
        </authorList>
    </citation>
    <scope>NUCLEOTIDE SEQUENCE [LARGE SCALE MRNA]</scope>
    <source>
        <tissue>Eye</tissue>
    </source>
</reference>
<reference key="6">
    <citation type="journal article" date="2007" name="J. Cell Biol.">
        <title>Specific Rab GTPase-activating proteins define the Shiga toxin and epidermal growth factor uptake pathways.</title>
        <authorList>
            <person name="Fuchs E."/>
            <person name="Haas A.K."/>
            <person name="Spooner R.A."/>
            <person name="Yoshimura S."/>
            <person name="Lord J.M."/>
            <person name="Barr F.A."/>
        </authorList>
    </citation>
    <scope>FUNCTION</scope>
    <scope>SUBCELLULAR LOCATION</scope>
</reference>
<reference key="7">
    <citation type="journal article" date="2007" name="J. Cell Sci.">
        <title>Analysis of GTPase-activating proteins: Rab1 and Rab43 are key Rabs required to maintain a functional Golgi complex in human cells.</title>
        <authorList>
            <person name="Haas A.K."/>
            <person name="Yoshimura S."/>
            <person name="Stephens D.J."/>
            <person name="Preisinger C."/>
            <person name="Fuchs E."/>
            <person name="Barr F.A."/>
        </authorList>
    </citation>
    <scope>FUNCTION</scope>
    <scope>MUTAGENESIS OF THR-32</scope>
</reference>
<reference key="8">
    <citation type="journal article" date="2008" name="J. Cell Sci.">
        <title>Rab18 and Rab43 have key roles in ER-Golgi trafficking.</title>
        <authorList>
            <person name="Dejgaard S.Y."/>
            <person name="Murshid A."/>
            <person name="Erman A."/>
            <person name="Kizilay O."/>
            <person name="Verbich D."/>
            <person name="Lodge R."/>
            <person name="Dejgaard K."/>
            <person name="Ly-Hartig T.B."/>
            <person name="Pepperkok R."/>
            <person name="Simpson J.C."/>
            <person name="Presley J.F."/>
        </authorList>
    </citation>
    <scope>FUNCTION</scope>
    <scope>MUTAGENESIS OF THR-32</scope>
    <scope>SUBCELLULAR LOCATION</scope>
</reference>
<reference key="9">
    <citation type="journal article" date="2008" name="Proc. Natl. Acad. Sci. U.S.A.">
        <title>A quantitative atlas of mitotic phosphorylation.</title>
        <authorList>
            <person name="Dephoure N."/>
            <person name="Zhou C."/>
            <person name="Villen J."/>
            <person name="Beausoleil S.A."/>
            <person name="Bakalarski C.E."/>
            <person name="Elledge S.J."/>
            <person name="Gygi S.P."/>
        </authorList>
    </citation>
    <scope>PHOSPHORYLATION [LARGE SCALE ANALYSIS] AT SER-193</scope>
    <scope>IDENTIFICATION BY MASS SPECTROMETRY [LARGE SCALE ANALYSIS]</scope>
    <source>
        <tissue>Cervix carcinoma</tissue>
    </source>
</reference>
<reference key="10">
    <citation type="journal article" date="2010" name="Sci. Signal.">
        <title>Quantitative phosphoproteomics reveals widespread full phosphorylation site occupancy during mitosis.</title>
        <authorList>
            <person name="Olsen J.V."/>
            <person name="Vermeulen M."/>
            <person name="Santamaria A."/>
            <person name="Kumar C."/>
            <person name="Miller M.L."/>
            <person name="Jensen L.J."/>
            <person name="Gnad F."/>
            <person name="Cox J."/>
            <person name="Jensen T.S."/>
            <person name="Nigg E.A."/>
            <person name="Brunak S."/>
            <person name="Mann M."/>
        </authorList>
    </citation>
    <scope>PHOSPHORYLATION [LARGE SCALE ANALYSIS] AT SER-193</scope>
    <scope>IDENTIFICATION BY MASS SPECTROMETRY [LARGE SCALE ANALYSIS]</scope>
    <source>
        <tissue>Cervix carcinoma</tissue>
    </source>
</reference>
<reference key="11">
    <citation type="journal article" date="2011" name="BMC Syst. Biol.">
        <title>Initial characterization of the human central proteome.</title>
        <authorList>
            <person name="Burkard T.R."/>
            <person name="Planyavsky M."/>
            <person name="Kaupe I."/>
            <person name="Breitwieser F.P."/>
            <person name="Buerckstuemmer T."/>
            <person name="Bennett K.L."/>
            <person name="Superti-Furga G."/>
            <person name="Colinge J."/>
        </authorList>
    </citation>
    <scope>IDENTIFICATION BY MASS SPECTROMETRY [LARGE SCALE ANALYSIS]</scope>
</reference>
<reference key="12">
    <citation type="journal article" date="2011" name="Traffic">
        <title>Rab GTPases regulating phagosome maturation are differentially recruited to mycobacterial phagosomes.</title>
        <authorList>
            <person name="Seto S."/>
            <person name="Tsujimura K."/>
            <person name="Koide Y."/>
        </authorList>
    </citation>
    <scope>FUNCTION</scope>
    <scope>SUBCELLULAR LOCATION</scope>
</reference>
<reference key="13">
    <citation type="journal article" date="2017" name="Elife">
        <title>Systematic proteomic analysis of LRRK2-mediated Rab GTPase phosphorylation establishes a connection to ciliogenesis.</title>
        <authorList>
            <person name="Steger M."/>
            <person name="Diez F."/>
            <person name="Dhekne H.S."/>
            <person name="Lis P."/>
            <person name="Nirujogi R.S."/>
            <person name="Karayel O."/>
            <person name="Tonelli F."/>
            <person name="Martinez T.N."/>
            <person name="Lorentzen E."/>
            <person name="Pfeffer S.R."/>
            <person name="Alessi D.R."/>
            <person name="Mann M."/>
        </authorList>
    </citation>
    <scope>INTERACTION WITH GDI1; GDI2; CHM AND CHML</scope>
    <scope>PHOSPHORYLATION AT THR-82</scope>
    <scope>MUTAGENESIS OF THR-82</scope>
</reference>
<reference key="14">
    <citation type="submission" date="2009-02" db="PDB data bank">
        <title>Crystal structure of human RAB43 in complex with GDP.</title>
        <authorList>
            <consortium name="Structural genomics consortium (SGC)"/>
        </authorList>
    </citation>
    <scope>X-RAY CRYSTALLOGRAPHY (2.05 ANGSTROMS) OF 9-190 IN COMPLEX WITH GDP</scope>
</reference>
<proteinExistence type="evidence at protein level"/>
<comment type="function">
    <text evidence="4 5 6 7">The small GTPases Rab are key regulators of intracellular membrane trafficking, from the formation of transport vesicles to their fusion with membranes. Rabs cycle between an inactive GDP-bound form and an active GTP-bound form that is able to recruit to membranes different set of downstream effectors directly responsible for vesicle formation, movement, tethering and fusion. The low intrinsic GTPase activity of RAB43 is activated by USP6NL. Involved in retrograde transport from the endocytic pathway to the Golgi apparatus. Involved in the transport of Shiga toxin from early and recycling endosomes to the trans-Golgi network. Required for the structural integrity of the Golgi complex. Plays a role in the maturation of phagosomes that engulf pathogens, such as S.aureus and M.tuberculosis.</text>
</comment>
<comment type="subunit">
    <text evidence="8">Interacts with GDI1, GDI2, CHM and CHML; phosphorylation at Thr-82 disrupts these interactions.</text>
</comment>
<comment type="interaction">
    <interactant intactId="EBI-4401730">
        <id>Q86YS6</id>
    </interactant>
    <interactant intactId="EBI-352682">
        <id>P04792</id>
        <label>HSPB1</label>
    </interactant>
    <organismsDiffer>false</organismsDiffer>
    <experiments>2</experiments>
</comment>
<comment type="subcellular location">
    <subcellularLocation>
        <location evidence="7">Cytoplasmic vesicle</location>
        <location evidence="7">Phagosome</location>
    </subcellularLocation>
    <subcellularLocation>
        <location evidence="9">Cytoplasmic vesicle</location>
        <location evidence="9">Phagosome membrane</location>
        <topology evidence="9">Lipid-anchor</topology>
        <orientation evidence="9">Cytoplasmic side</orientation>
    </subcellularLocation>
    <subcellularLocation>
        <location evidence="4 6">Golgi apparatus</location>
    </subcellularLocation>
    <subcellularLocation>
        <location evidence="9">Golgi apparatus</location>
        <location evidence="9">trans-Golgi network membrane</location>
        <topology evidence="9">Lipid-anchor</topology>
    </subcellularLocation>
    <subcellularLocation>
        <location evidence="4">Golgi apparatus</location>
        <location evidence="4">trans-Golgi network</location>
    </subcellularLocation>
    <text evidence="7">Recruited to phagosomes containing S.aureus or M.tuberculosis (PubMed:21255211).</text>
</comment>
<comment type="alternative products">
    <event type="alternative splicing"/>
    <isoform>
        <id>Q86YS6-1</id>
        <name>1</name>
        <sequence type="displayed"/>
    </isoform>
    <isoform>
        <id>Q9ULR0-1</id>
        <name>2</name>
        <name>ISY1-RAB43</name>
        <sequence type="external"/>
    </isoform>
    <isoform>
        <id>Q86YS6-2</id>
        <name>3</name>
        <sequence type="described" ref="VSP_054030 VSP_054031"/>
    </isoform>
</comment>
<comment type="tissue specificity">
    <text evidence="3">Widely expressed in brain, testis, lung, heart, ovary, colon, kidney, uterus and spleen but not in liver.</text>
</comment>
<comment type="similarity">
    <text evidence="9">Belongs to the small GTPase superfamily. Rab family.</text>
</comment>
<gene>
    <name type="primary">RAB43</name>
    <name type="synonym">RAB41</name>
</gene>
<feature type="chain" id="PRO_0000244615" description="Ras-related protein Rab-43">
    <location>
        <begin position="1"/>
        <end position="212"/>
    </location>
</feature>
<feature type="short sequence motif" description="Effector region" evidence="1">
    <location>
        <begin position="47"/>
        <end position="55"/>
    </location>
</feature>
<feature type="binding site">
    <location>
        <begin position="25"/>
        <end position="32"/>
    </location>
    <ligand>
        <name>GTP</name>
        <dbReference type="ChEBI" id="CHEBI:37565"/>
    </ligand>
</feature>
<feature type="binding site" evidence="1">
    <location>
        <begin position="73"/>
        <end position="77"/>
    </location>
    <ligand>
        <name>GTP</name>
        <dbReference type="ChEBI" id="CHEBI:37565"/>
    </ligand>
</feature>
<feature type="binding site">
    <location>
        <begin position="131"/>
        <end position="134"/>
    </location>
    <ligand>
        <name>GTP</name>
        <dbReference type="ChEBI" id="CHEBI:37565"/>
    </ligand>
</feature>
<feature type="binding site">
    <location>
        <begin position="163"/>
        <end position="164"/>
    </location>
    <ligand>
        <name>GTP</name>
        <dbReference type="ChEBI" id="CHEBI:37565"/>
    </ligand>
</feature>
<feature type="modified residue" description="Phosphoserine" evidence="2">
    <location>
        <position position="49"/>
    </location>
</feature>
<feature type="modified residue" description="Phosphothreonine; by LRRK2" evidence="8">
    <location>
        <position position="82"/>
    </location>
</feature>
<feature type="modified residue" description="Phosphoserine" evidence="10 11">
    <location>
        <position position="193"/>
    </location>
</feature>
<feature type="modified residue" description="Cysteine methyl ester" evidence="1">
    <location>
        <position position="212"/>
    </location>
</feature>
<feature type="lipid moiety-binding region" description="S-geranylgeranyl cysteine" evidence="1">
    <location>
        <position position="210"/>
    </location>
</feature>
<feature type="lipid moiety-binding region" description="S-geranylgeranyl cysteine" evidence="1">
    <location>
        <position position="212"/>
    </location>
</feature>
<feature type="splice variant" id="VSP_054030" description="In isoform 3." evidence="9">
    <original>GNKSDLSELREVSLAEAQSLAEHYDI</original>
    <variation>EMQSCYVAQADLELLASSNPPASTSK</variation>
    <location>
        <begin position="130"/>
        <end position="155"/>
    </location>
</feature>
<feature type="splice variant" id="VSP_054031" description="In isoform 3." evidence="9">
    <location>
        <begin position="156"/>
        <end position="212"/>
    </location>
</feature>
<feature type="mutagenesis site" description="Abolishes activity. Disrupts Golgi structure." evidence="5 6">
    <original>T</original>
    <variation>N</variation>
    <location>
        <position position="32"/>
    </location>
</feature>
<feature type="mutagenesis site" description="Loss of phosphorylation. No effect on binding of GDI1 and GDI2." evidence="8">
    <original>T</original>
    <variation>A</variation>
    <location>
        <position position="82"/>
    </location>
</feature>
<feature type="mutagenesis site" description="Phosphomimetic mutant. Loss of binding to GDI1, GDI2, CHM and CHML." evidence="8">
    <original>T</original>
    <variation>E</variation>
    <location>
        <position position="82"/>
    </location>
</feature>
<feature type="strand" evidence="12">
    <location>
        <begin position="17"/>
        <end position="25"/>
    </location>
</feature>
<feature type="helix" evidence="12">
    <location>
        <begin position="31"/>
        <end position="40"/>
    </location>
</feature>
<feature type="strand" evidence="12">
    <location>
        <begin position="55"/>
        <end position="62"/>
    </location>
</feature>
<feature type="strand" evidence="12">
    <location>
        <begin position="65"/>
        <end position="72"/>
    </location>
</feature>
<feature type="helix" evidence="12">
    <location>
        <begin position="78"/>
        <end position="80"/>
    </location>
</feature>
<feature type="helix" evidence="12">
    <location>
        <begin position="81"/>
        <end position="88"/>
    </location>
</feature>
<feature type="strand" evidence="12">
    <location>
        <begin position="92"/>
        <end position="99"/>
    </location>
</feature>
<feature type="helix" evidence="12">
    <location>
        <begin position="103"/>
        <end position="107"/>
    </location>
</feature>
<feature type="helix" evidence="12">
    <location>
        <begin position="109"/>
        <end position="119"/>
    </location>
</feature>
<feature type="strand" evidence="12">
    <location>
        <begin position="125"/>
        <end position="131"/>
    </location>
</feature>
<feature type="helix" evidence="12">
    <location>
        <begin position="136"/>
        <end position="138"/>
    </location>
</feature>
<feature type="helix" evidence="12">
    <location>
        <begin position="143"/>
        <end position="152"/>
    </location>
</feature>
<feature type="strand" evidence="12">
    <location>
        <begin position="156"/>
        <end position="160"/>
    </location>
</feature>
<feature type="turn" evidence="12">
    <location>
        <begin position="163"/>
        <end position="166"/>
    </location>
</feature>
<feature type="helix" evidence="12">
    <location>
        <begin position="169"/>
        <end position="183"/>
    </location>
</feature>
<evidence type="ECO:0000250" key="1"/>
<evidence type="ECO:0000250" key="2">
    <source>
        <dbReference type="UniProtKB" id="Q8CG50"/>
    </source>
</evidence>
<evidence type="ECO:0000269" key="3">
    <source>
    </source>
</evidence>
<evidence type="ECO:0000269" key="4">
    <source>
    </source>
</evidence>
<evidence type="ECO:0000269" key="5">
    <source>
    </source>
</evidence>
<evidence type="ECO:0000269" key="6">
    <source>
    </source>
</evidence>
<evidence type="ECO:0000269" key="7">
    <source>
    </source>
</evidence>
<evidence type="ECO:0000269" key="8">
    <source>
    </source>
</evidence>
<evidence type="ECO:0000305" key="9"/>
<evidence type="ECO:0007744" key="10">
    <source>
    </source>
</evidence>
<evidence type="ECO:0007744" key="11">
    <source>
    </source>
</evidence>
<evidence type="ECO:0007829" key="12">
    <source>
        <dbReference type="PDB" id="2HUP"/>
    </source>
</evidence>
<sequence length="212" mass="23339">MAGPGPGPGDPDEQYDFLFKLVLVGDASVGKTCVVQRFKTGAFSERQGSTIGVDFTMKTLEIQGKRVKLQIWDTAGQERFRTITQSYYRSANGAILAYDITKRSSFLSVPHWIEDVRKYAGSNIVQLLIGNKSDLSELREVSLAEAQSLAEHYDILCAIETSAKDSSNVEEAFLRVATELIMRHGGPLFSEKSPDHIQLNSKDIGEGWGCGC</sequence>
<accession>Q86YS6</accession>
<accession>A8K4P9</accession>
<accession>E9PBQ0</accession>
<protein>
    <recommendedName>
        <fullName>Ras-related protein Rab-43</fullName>
    </recommendedName>
    <alternativeName>
        <fullName>Ras-related protein Rab-41</fullName>
    </alternativeName>
</protein>
<organism>
    <name type="scientific">Homo sapiens</name>
    <name type="common">Human</name>
    <dbReference type="NCBI Taxonomy" id="9606"/>
    <lineage>
        <taxon>Eukaryota</taxon>
        <taxon>Metazoa</taxon>
        <taxon>Chordata</taxon>
        <taxon>Craniata</taxon>
        <taxon>Vertebrata</taxon>
        <taxon>Euteleostomi</taxon>
        <taxon>Mammalia</taxon>
        <taxon>Eutheria</taxon>
        <taxon>Euarchontoglires</taxon>
        <taxon>Primates</taxon>
        <taxon>Haplorrhini</taxon>
        <taxon>Catarrhini</taxon>
        <taxon>Hominidae</taxon>
        <taxon>Homo</taxon>
    </lineage>
</organism>
<keyword id="KW-0002">3D-structure</keyword>
<keyword id="KW-0025">Alternative splicing</keyword>
<keyword id="KW-0968">Cytoplasmic vesicle</keyword>
<keyword id="KW-0333">Golgi apparatus</keyword>
<keyword id="KW-0342">GTP-binding</keyword>
<keyword id="KW-0449">Lipoprotein</keyword>
<keyword id="KW-0472">Membrane</keyword>
<keyword id="KW-0488">Methylation</keyword>
<keyword id="KW-0547">Nucleotide-binding</keyword>
<keyword id="KW-0597">Phosphoprotein</keyword>
<keyword id="KW-0636">Prenylation</keyword>
<keyword id="KW-1267">Proteomics identification</keyword>
<keyword id="KW-1185">Reference proteome</keyword>
<dbReference type="EMBL" id="AY166852">
    <property type="protein sequence ID" value="AAO17291.1"/>
    <property type="molecule type" value="mRNA"/>
</dbReference>
<dbReference type="EMBL" id="AK291014">
    <property type="protein sequence ID" value="BAF83703.1"/>
    <property type="molecule type" value="mRNA"/>
</dbReference>
<dbReference type="EMBL" id="AC108673">
    <property type="status" value="NOT_ANNOTATED_CDS"/>
    <property type="molecule type" value="Genomic_DNA"/>
</dbReference>
<dbReference type="EMBL" id="CH471052">
    <property type="protein sequence ID" value="EAW79283.1"/>
    <property type="molecule type" value="Genomic_DNA"/>
</dbReference>
<dbReference type="EMBL" id="BC062319">
    <property type="protein sequence ID" value="AAH62319.1"/>
    <property type="molecule type" value="mRNA"/>
</dbReference>
<dbReference type="CCDS" id="CCDS33850.1">
    <molecule id="Q86YS6-1"/>
</dbReference>
<dbReference type="CCDS" id="CCDS56275.1">
    <molecule id="Q86YS6-2"/>
</dbReference>
<dbReference type="RefSeq" id="NP_001191812.1">
    <molecule id="Q86YS6-1"/>
    <property type="nucleotide sequence ID" value="NM_001204883.2"/>
</dbReference>
<dbReference type="RefSeq" id="NP_001191813.1">
    <molecule id="Q86YS6-1"/>
    <property type="nucleotide sequence ID" value="NM_001204884.2"/>
</dbReference>
<dbReference type="RefSeq" id="NP_001191814.1">
    <molecule id="Q86YS6-1"/>
    <property type="nucleotide sequence ID" value="NM_001204885.1"/>
</dbReference>
<dbReference type="RefSeq" id="NP_001191815.1">
    <molecule id="Q86YS6-1"/>
    <property type="nucleotide sequence ID" value="NM_001204886.2"/>
</dbReference>
<dbReference type="RefSeq" id="NP_001191816.1">
    <molecule id="Q86YS6-2"/>
    <property type="nucleotide sequence ID" value="NM_001204887.2"/>
</dbReference>
<dbReference type="RefSeq" id="NP_940892.1">
    <molecule id="Q86YS6-1"/>
    <property type="nucleotide sequence ID" value="NM_198490.3"/>
</dbReference>
<dbReference type="PDB" id="2HUP">
    <property type="method" value="X-ray"/>
    <property type="resolution" value="2.05 A"/>
    <property type="chains" value="A/B=9-190"/>
</dbReference>
<dbReference type="PDBsum" id="2HUP"/>
<dbReference type="SMR" id="Q86YS6"/>
<dbReference type="BioGRID" id="130830">
    <property type="interactions" value="47"/>
</dbReference>
<dbReference type="FunCoup" id="Q86YS6">
    <property type="interactions" value="641"/>
</dbReference>
<dbReference type="IntAct" id="Q86YS6">
    <property type="interactions" value="38"/>
</dbReference>
<dbReference type="MINT" id="Q86YS6"/>
<dbReference type="STRING" id="9606.ENSP00000319781"/>
<dbReference type="GlyGen" id="Q86YS6">
    <property type="glycosylation" value="1 site, 1 N-linked glycan (1 site)"/>
</dbReference>
<dbReference type="iPTMnet" id="Q86YS6"/>
<dbReference type="PhosphoSitePlus" id="Q86YS6"/>
<dbReference type="BioMuta" id="RAB43"/>
<dbReference type="DMDM" id="74727944"/>
<dbReference type="jPOST" id="Q86YS6"/>
<dbReference type="MassIVE" id="Q86YS6"/>
<dbReference type="PaxDb" id="9606-ENSP00000319781"/>
<dbReference type="PeptideAtlas" id="Q86YS6"/>
<dbReference type="ProteomicsDB" id="19270"/>
<dbReference type="ProteomicsDB" id="70463">
    <molecule id="Q86YS6-1"/>
</dbReference>
<dbReference type="Pumba" id="Q86YS6"/>
<dbReference type="Antibodypedia" id="34842">
    <property type="antibodies" value="104 antibodies from 24 providers"/>
</dbReference>
<dbReference type="DNASU" id="339122"/>
<dbReference type="Ensembl" id="ENST00000315150.10">
    <molecule id="Q86YS6-1"/>
    <property type="protein sequence ID" value="ENSP00000319781.6"/>
    <property type="gene ID" value="ENSG00000172780.17"/>
</dbReference>
<dbReference type="Ensembl" id="ENST00000393304.5">
    <molecule id="Q86YS6-1"/>
    <property type="protein sequence ID" value="ENSP00000376981.1"/>
    <property type="gene ID" value="ENSG00000172780.17"/>
</dbReference>
<dbReference type="Ensembl" id="ENST00000393305.5">
    <molecule id="Q86YS6-1"/>
    <property type="protein sequence ID" value="ENSP00000376982.1"/>
    <property type="gene ID" value="ENSG00000172780.17"/>
</dbReference>
<dbReference type="Ensembl" id="ENST00000393307.5">
    <molecule id="Q86YS6-1"/>
    <property type="protein sequence ID" value="ENSP00000376984.1"/>
    <property type="gene ID" value="ENSG00000172780.17"/>
</dbReference>
<dbReference type="Ensembl" id="ENST00000393308.5">
    <molecule id="Q86YS6-1"/>
    <property type="protein sequence ID" value="ENSP00000376985.1"/>
    <property type="gene ID" value="ENSG00000172780.17"/>
</dbReference>
<dbReference type="Ensembl" id="ENST00000476465.5">
    <molecule id="Q86YS6-2"/>
    <property type="protein sequence ID" value="ENSP00000427632.1"/>
    <property type="gene ID" value="ENSG00000172780.17"/>
</dbReference>
<dbReference type="Ensembl" id="ENST00000615093.1">
    <molecule id="Q86YS6-2"/>
    <property type="protein sequence ID" value="ENSP00000481399.1"/>
    <property type="gene ID" value="ENSG00000172780.17"/>
</dbReference>
<dbReference type="GeneID" id="339122"/>
<dbReference type="KEGG" id="hsa:339122"/>
<dbReference type="MANE-Select" id="ENST00000315150.10">
    <property type="protein sequence ID" value="ENSP00000319781.6"/>
    <property type="RefSeq nucleotide sequence ID" value="NM_198490.3"/>
    <property type="RefSeq protein sequence ID" value="NP_940892.1"/>
</dbReference>
<dbReference type="UCSC" id="uc003eln.3">
    <molecule id="Q86YS6-1"/>
    <property type="organism name" value="human"/>
</dbReference>
<dbReference type="AGR" id="HGNC:19983"/>
<dbReference type="CTD" id="339122"/>
<dbReference type="DisGeNET" id="339122"/>
<dbReference type="GeneCards" id="RAB43"/>
<dbReference type="HGNC" id="HGNC:19983">
    <property type="gene designation" value="RAB43"/>
</dbReference>
<dbReference type="HPA" id="ENSG00000172780">
    <property type="expression patterns" value="Tissue enhanced (liver)"/>
</dbReference>
<dbReference type="MalaCards" id="RAB43"/>
<dbReference type="neXtProt" id="NX_Q86YS6"/>
<dbReference type="OpenTargets" id="ENSG00000172780"/>
<dbReference type="PharmGKB" id="PA134968262"/>
<dbReference type="VEuPathDB" id="HostDB:ENSG00000172780"/>
<dbReference type="eggNOG" id="KOG0084">
    <property type="taxonomic scope" value="Eukaryota"/>
</dbReference>
<dbReference type="GeneTree" id="ENSGT00940000161980"/>
<dbReference type="HOGENOM" id="CLU_041217_23_1_1"/>
<dbReference type="InParanoid" id="Q86YS6"/>
<dbReference type="OMA" id="FIERHGN"/>
<dbReference type="OrthoDB" id="9989112at2759"/>
<dbReference type="PAN-GO" id="Q86YS6">
    <property type="GO annotations" value="4 GO annotations based on evolutionary models"/>
</dbReference>
<dbReference type="PhylomeDB" id="Q86YS6"/>
<dbReference type="TreeFam" id="TF300097"/>
<dbReference type="PathwayCommons" id="Q86YS6"/>
<dbReference type="Reactome" id="R-HSA-6811440">
    <property type="pathway name" value="Retrograde transport at the Trans-Golgi-Network"/>
</dbReference>
<dbReference type="Reactome" id="R-HSA-8873719">
    <property type="pathway name" value="RAB geranylgeranylation"/>
</dbReference>
<dbReference type="SignaLink" id="Q86YS6"/>
<dbReference type="BioGRID-ORCS" id="339122">
    <property type="hits" value="44 hits in 1119 CRISPR screens"/>
</dbReference>
<dbReference type="EvolutionaryTrace" id="Q86YS6"/>
<dbReference type="GenomeRNAi" id="339122"/>
<dbReference type="Pharos" id="Q86YS6">
    <property type="development level" value="Tbio"/>
</dbReference>
<dbReference type="PRO" id="PR:Q86YS6"/>
<dbReference type="Proteomes" id="UP000005640">
    <property type="component" value="Chromosome 3"/>
</dbReference>
<dbReference type="RNAct" id="Q86YS6">
    <property type="molecule type" value="protein"/>
</dbReference>
<dbReference type="Bgee" id="ENSG00000172780">
    <property type="expression patterns" value="Expressed in blood and 96 other cell types or tissues"/>
</dbReference>
<dbReference type="ExpressionAtlas" id="Q86YS6">
    <property type="expression patterns" value="baseline and differential"/>
</dbReference>
<dbReference type="GO" id="GO:0012505">
    <property type="term" value="C:endomembrane system"/>
    <property type="evidence" value="ECO:0000318"/>
    <property type="project" value="GO_Central"/>
</dbReference>
<dbReference type="GO" id="GO:0070062">
    <property type="term" value="C:extracellular exosome"/>
    <property type="evidence" value="ECO:0007005"/>
    <property type="project" value="UniProtKB"/>
</dbReference>
<dbReference type="GO" id="GO:0005794">
    <property type="term" value="C:Golgi apparatus"/>
    <property type="evidence" value="ECO:0000314"/>
    <property type="project" value="UniProtKB"/>
</dbReference>
<dbReference type="GO" id="GO:0045335">
    <property type="term" value="C:phagocytic vesicle"/>
    <property type="evidence" value="ECO:0000314"/>
    <property type="project" value="UniProtKB"/>
</dbReference>
<dbReference type="GO" id="GO:0030670">
    <property type="term" value="C:phagocytic vesicle membrane"/>
    <property type="evidence" value="ECO:0007669"/>
    <property type="project" value="UniProtKB-SubCell"/>
</dbReference>
<dbReference type="GO" id="GO:0032588">
    <property type="term" value="C:trans-Golgi network membrane"/>
    <property type="evidence" value="ECO:0000304"/>
    <property type="project" value="Reactome"/>
</dbReference>
<dbReference type="GO" id="GO:0005525">
    <property type="term" value="F:GTP binding"/>
    <property type="evidence" value="ECO:0007669"/>
    <property type="project" value="UniProtKB-KW"/>
</dbReference>
<dbReference type="GO" id="GO:0003924">
    <property type="term" value="F:GTPase activity"/>
    <property type="evidence" value="ECO:0000314"/>
    <property type="project" value="UniProtKB"/>
</dbReference>
<dbReference type="GO" id="GO:0000045">
    <property type="term" value="P:autophagosome assembly"/>
    <property type="evidence" value="ECO:0000318"/>
    <property type="project" value="GO_Central"/>
</dbReference>
<dbReference type="GO" id="GO:0071346">
    <property type="term" value="P:cellular response to type II interferon"/>
    <property type="evidence" value="ECO:0007669"/>
    <property type="project" value="Ensembl"/>
</dbReference>
<dbReference type="GO" id="GO:0007030">
    <property type="term" value="P:Golgi organization"/>
    <property type="evidence" value="ECO:0000315"/>
    <property type="project" value="UniProtKB"/>
</dbReference>
<dbReference type="GO" id="GO:0006886">
    <property type="term" value="P:intracellular protein transport"/>
    <property type="evidence" value="ECO:0000318"/>
    <property type="project" value="GO_Central"/>
</dbReference>
<dbReference type="GO" id="GO:0090382">
    <property type="term" value="P:phagosome maturation"/>
    <property type="evidence" value="ECO:0000315"/>
    <property type="project" value="UniProtKB"/>
</dbReference>
<dbReference type="GO" id="GO:0035526">
    <property type="term" value="P:retrograde transport, plasma membrane to Golgi"/>
    <property type="evidence" value="ECO:0000315"/>
    <property type="project" value="UniProtKB"/>
</dbReference>
<dbReference type="GO" id="GO:0019068">
    <property type="term" value="P:virion assembly"/>
    <property type="evidence" value="ECO:0000315"/>
    <property type="project" value="UniProtKB"/>
</dbReference>
<dbReference type="CDD" id="cd01864">
    <property type="entry name" value="Rab19"/>
    <property type="match status" value="1"/>
</dbReference>
<dbReference type="FunFam" id="3.40.50.300:FF:000803">
    <property type="entry name" value="Ras-related protein Rab-43"/>
    <property type="match status" value="1"/>
</dbReference>
<dbReference type="Gene3D" id="3.40.50.300">
    <property type="entry name" value="P-loop containing nucleotide triphosphate hydrolases"/>
    <property type="match status" value="1"/>
</dbReference>
<dbReference type="InterPro" id="IPR027417">
    <property type="entry name" value="P-loop_NTPase"/>
</dbReference>
<dbReference type="InterPro" id="IPR048040">
    <property type="entry name" value="Rab19/43"/>
</dbReference>
<dbReference type="InterPro" id="IPR050209">
    <property type="entry name" value="Rab_GTPases_membrane_traffic"/>
</dbReference>
<dbReference type="InterPro" id="IPR005225">
    <property type="entry name" value="Small_GTP-bd"/>
</dbReference>
<dbReference type="InterPro" id="IPR001806">
    <property type="entry name" value="Small_GTPase"/>
</dbReference>
<dbReference type="NCBIfam" id="TIGR00231">
    <property type="entry name" value="small_GTP"/>
    <property type="match status" value="1"/>
</dbReference>
<dbReference type="PANTHER" id="PTHR47979">
    <property type="entry name" value="DRAB11-RELATED"/>
    <property type="match status" value="1"/>
</dbReference>
<dbReference type="Pfam" id="PF00071">
    <property type="entry name" value="Ras"/>
    <property type="match status" value="1"/>
</dbReference>
<dbReference type="PRINTS" id="PR00449">
    <property type="entry name" value="RASTRNSFRMNG"/>
</dbReference>
<dbReference type="SMART" id="SM00175">
    <property type="entry name" value="RAB"/>
    <property type="match status" value="1"/>
</dbReference>
<dbReference type="SMART" id="SM00176">
    <property type="entry name" value="RAN"/>
    <property type="match status" value="1"/>
</dbReference>
<dbReference type="SMART" id="SM00173">
    <property type="entry name" value="RAS"/>
    <property type="match status" value="1"/>
</dbReference>
<dbReference type="SMART" id="SM00174">
    <property type="entry name" value="RHO"/>
    <property type="match status" value="1"/>
</dbReference>
<dbReference type="SUPFAM" id="SSF52540">
    <property type="entry name" value="P-loop containing nucleoside triphosphate hydrolases"/>
    <property type="match status" value="1"/>
</dbReference>
<dbReference type="PROSITE" id="PS51419">
    <property type="entry name" value="RAB"/>
    <property type="match status" value="1"/>
</dbReference>